<sequence>MVIIRLARGGSKKRPFYNIVATDSRNRRDGRFIERVGFYNPVATKGEALRIAQDRLTYWQGVGAQLSPTVERLVKQAQKAQPAA</sequence>
<reference key="1">
    <citation type="journal article" date="2010" name="Genome Biol. Evol.">
        <title>Continuing evolution of Burkholderia mallei through genome reduction and large-scale rearrangements.</title>
        <authorList>
            <person name="Losada L."/>
            <person name="Ronning C.M."/>
            <person name="DeShazer D."/>
            <person name="Woods D."/>
            <person name="Fedorova N."/>
            <person name="Kim H.S."/>
            <person name="Shabalina S.A."/>
            <person name="Pearson T.R."/>
            <person name="Brinkac L."/>
            <person name="Tan P."/>
            <person name="Nandi T."/>
            <person name="Crabtree J."/>
            <person name="Badger J."/>
            <person name="Beckstrom-Sternberg S."/>
            <person name="Saqib M."/>
            <person name="Schutzer S.E."/>
            <person name="Keim P."/>
            <person name="Nierman W.C."/>
        </authorList>
    </citation>
    <scope>NUCLEOTIDE SEQUENCE [LARGE SCALE GENOMIC DNA]</scope>
    <source>
        <strain>NCTC 10229</strain>
    </source>
</reference>
<comment type="similarity">
    <text evidence="1">Belongs to the bacterial ribosomal protein bS16 family.</text>
</comment>
<dbReference type="EMBL" id="CP000546">
    <property type="protein sequence ID" value="ABN02149.1"/>
    <property type="molecule type" value="Genomic_DNA"/>
</dbReference>
<dbReference type="RefSeq" id="WP_004189402.1">
    <property type="nucleotide sequence ID" value="NC_008836.1"/>
</dbReference>
<dbReference type="SMR" id="A2S4P0"/>
<dbReference type="GeneID" id="93061079"/>
<dbReference type="KEGG" id="bml:BMA10229_A0919"/>
<dbReference type="HOGENOM" id="CLU_100590_5_1_4"/>
<dbReference type="Proteomes" id="UP000002283">
    <property type="component" value="Chromosome I"/>
</dbReference>
<dbReference type="GO" id="GO:0005737">
    <property type="term" value="C:cytoplasm"/>
    <property type="evidence" value="ECO:0007669"/>
    <property type="project" value="UniProtKB-ARBA"/>
</dbReference>
<dbReference type="GO" id="GO:0015935">
    <property type="term" value="C:small ribosomal subunit"/>
    <property type="evidence" value="ECO:0007669"/>
    <property type="project" value="TreeGrafter"/>
</dbReference>
<dbReference type="GO" id="GO:0003735">
    <property type="term" value="F:structural constituent of ribosome"/>
    <property type="evidence" value="ECO:0007669"/>
    <property type="project" value="InterPro"/>
</dbReference>
<dbReference type="GO" id="GO:0006412">
    <property type="term" value="P:translation"/>
    <property type="evidence" value="ECO:0007669"/>
    <property type="project" value="UniProtKB-UniRule"/>
</dbReference>
<dbReference type="Gene3D" id="3.30.1320.10">
    <property type="match status" value="1"/>
</dbReference>
<dbReference type="HAMAP" id="MF_00385">
    <property type="entry name" value="Ribosomal_bS16"/>
    <property type="match status" value="1"/>
</dbReference>
<dbReference type="InterPro" id="IPR000307">
    <property type="entry name" value="Ribosomal_bS16"/>
</dbReference>
<dbReference type="InterPro" id="IPR023803">
    <property type="entry name" value="Ribosomal_bS16_dom_sf"/>
</dbReference>
<dbReference type="NCBIfam" id="TIGR00002">
    <property type="entry name" value="S16"/>
    <property type="match status" value="1"/>
</dbReference>
<dbReference type="PANTHER" id="PTHR12919">
    <property type="entry name" value="30S RIBOSOMAL PROTEIN S16"/>
    <property type="match status" value="1"/>
</dbReference>
<dbReference type="PANTHER" id="PTHR12919:SF20">
    <property type="entry name" value="SMALL RIBOSOMAL SUBUNIT PROTEIN BS16M"/>
    <property type="match status" value="1"/>
</dbReference>
<dbReference type="Pfam" id="PF00886">
    <property type="entry name" value="Ribosomal_S16"/>
    <property type="match status" value="1"/>
</dbReference>
<dbReference type="SUPFAM" id="SSF54565">
    <property type="entry name" value="Ribosomal protein S16"/>
    <property type="match status" value="1"/>
</dbReference>
<proteinExistence type="inferred from homology"/>
<evidence type="ECO:0000255" key="1">
    <source>
        <dbReference type="HAMAP-Rule" id="MF_00385"/>
    </source>
</evidence>
<evidence type="ECO:0000305" key="2"/>
<protein>
    <recommendedName>
        <fullName evidence="1">Small ribosomal subunit protein bS16</fullName>
    </recommendedName>
    <alternativeName>
        <fullName evidence="2">30S ribosomal protein S16</fullName>
    </alternativeName>
</protein>
<name>RS16_BURM9</name>
<organism>
    <name type="scientific">Burkholderia mallei (strain NCTC 10229)</name>
    <dbReference type="NCBI Taxonomy" id="412022"/>
    <lineage>
        <taxon>Bacteria</taxon>
        <taxon>Pseudomonadati</taxon>
        <taxon>Pseudomonadota</taxon>
        <taxon>Betaproteobacteria</taxon>
        <taxon>Burkholderiales</taxon>
        <taxon>Burkholderiaceae</taxon>
        <taxon>Burkholderia</taxon>
        <taxon>pseudomallei group</taxon>
    </lineage>
</organism>
<gene>
    <name evidence="1" type="primary">rpsP</name>
    <name type="ordered locus">BMA10229_A0919</name>
</gene>
<keyword id="KW-0687">Ribonucleoprotein</keyword>
<keyword id="KW-0689">Ribosomal protein</keyword>
<accession>A2S4P0</accession>
<feature type="chain" id="PRO_1000049227" description="Small ribosomal subunit protein bS16">
    <location>
        <begin position="1"/>
        <end position="84"/>
    </location>
</feature>